<accession>Q01Y13</accession>
<proteinExistence type="inferred from homology"/>
<keyword id="KW-0067">ATP-binding</keyword>
<keyword id="KW-0997">Cell inner membrane</keyword>
<keyword id="KW-1003">Cell membrane</keyword>
<keyword id="KW-0963">Cytoplasm</keyword>
<keyword id="KW-0472">Membrane</keyword>
<keyword id="KW-0479">Metal-binding</keyword>
<keyword id="KW-0547">Nucleotide-binding</keyword>
<keyword id="KW-0653">Protein transport</keyword>
<keyword id="KW-1278">Translocase</keyword>
<keyword id="KW-0811">Translocation</keyword>
<keyword id="KW-0813">Transport</keyword>
<keyword id="KW-0862">Zinc</keyword>
<name>SECA_SOLUE</name>
<gene>
    <name evidence="1" type="primary">secA</name>
    <name type="ordered locus">Acid_4491</name>
</gene>
<dbReference type="EC" id="7.4.2.8" evidence="1"/>
<dbReference type="EMBL" id="CP000473">
    <property type="protein sequence ID" value="ABJ85452.1"/>
    <property type="molecule type" value="Genomic_DNA"/>
</dbReference>
<dbReference type="SMR" id="Q01Y13"/>
<dbReference type="FunCoup" id="Q01Y13">
    <property type="interactions" value="652"/>
</dbReference>
<dbReference type="STRING" id="234267.Acid_4491"/>
<dbReference type="KEGG" id="sus:Acid_4491"/>
<dbReference type="eggNOG" id="COG0653">
    <property type="taxonomic scope" value="Bacteria"/>
</dbReference>
<dbReference type="HOGENOM" id="CLU_005314_3_0_0"/>
<dbReference type="InParanoid" id="Q01Y13"/>
<dbReference type="OrthoDB" id="9805579at2"/>
<dbReference type="GO" id="GO:0031522">
    <property type="term" value="C:cell envelope Sec protein transport complex"/>
    <property type="evidence" value="ECO:0007669"/>
    <property type="project" value="TreeGrafter"/>
</dbReference>
<dbReference type="GO" id="GO:0005829">
    <property type="term" value="C:cytosol"/>
    <property type="evidence" value="ECO:0007669"/>
    <property type="project" value="TreeGrafter"/>
</dbReference>
<dbReference type="GO" id="GO:0005886">
    <property type="term" value="C:plasma membrane"/>
    <property type="evidence" value="ECO:0007669"/>
    <property type="project" value="UniProtKB-SubCell"/>
</dbReference>
<dbReference type="GO" id="GO:0005524">
    <property type="term" value="F:ATP binding"/>
    <property type="evidence" value="ECO:0007669"/>
    <property type="project" value="UniProtKB-UniRule"/>
</dbReference>
<dbReference type="GO" id="GO:0046872">
    <property type="term" value="F:metal ion binding"/>
    <property type="evidence" value="ECO:0007669"/>
    <property type="project" value="UniProtKB-KW"/>
</dbReference>
<dbReference type="GO" id="GO:0008564">
    <property type="term" value="F:protein-exporting ATPase activity"/>
    <property type="evidence" value="ECO:0007669"/>
    <property type="project" value="UniProtKB-EC"/>
</dbReference>
<dbReference type="GO" id="GO:0065002">
    <property type="term" value="P:intracellular protein transmembrane transport"/>
    <property type="evidence" value="ECO:0007669"/>
    <property type="project" value="UniProtKB-UniRule"/>
</dbReference>
<dbReference type="GO" id="GO:0017038">
    <property type="term" value="P:protein import"/>
    <property type="evidence" value="ECO:0007669"/>
    <property type="project" value="InterPro"/>
</dbReference>
<dbReference type="GO" id="GO:0006605">
    <property type="term" value="P:protein targeting"/>
    <property type="evidence" value="ECO:0007669"/>
    <property type="project" value="UniProtKB-UniRule"/>
</dbReference>
<dbReference type="GO" id="GO:0043952">
    <property type="term" value="P:protein transport by the Sec complex"/>
    <property type="evidence" value="ECO:0007669"/>
    <property type="project" value="TreeGrafter"/>
</dbReference>
<dbReference type="CDD" id="cd17928">
    <property type="entry name" value="DEXDc_SecA"/>
    <property type="match status" value="1"/>
</dbReference>
<dbReference type="CDD" id="cd18803">
    <property type="entry name" value="SF2_C_secA"/>
    <property type="match status" value="1"/>
</dbReference>
<dbReference type="FunFam" id="3.40.50.300:FF:000113">
    <property type="entry name" value="Preprotein translocase subunit SecA"/>
    <property type="match status" value="1"/>
</dbReference>
<dbReference type="FunFam" id="3.40.50.300:FF:000246">
    <property type="entry name" value="Preprotein translocase subunit SecA"/>
    <property type="match status" value="1"/>
</dbReference>
<dbReference type="FunFam" id="3.90.1440.10:FF:000001">
    <property type="entry name" value="Preprotein translocase subunit SecA"/>
    <property type="match status" value="1"/>
</dbReference>
<dbReference type="FunFam" id="3.40.50.300:FF:000334">
    <property type="entry name" value="Protein translocase subunit SecA"/>
    <property type="match status" value="1"/>
</dbReference>
<dbReference type="Gene3D" id="3.10.450.50">
    <property type="match status" value="1"/>
</dbReference>
<dbReference type="Gene3D" id="1.10.3060.10">
    <property type="entry name" value="Helical scaffold and wing domains of SecA"/>
    <property type="match status" value="1"/>
</dbReference>
<dbReference type="Gene3D" id="3.40.50.300">
    <property type="entry name" value="P-loop containing nucleotide triphosphate hydrolases"/>
    <property type="match status" value="2"/>
</dbReference>
<dbReference type="Gene3D" id="3.90.1440.10">
    <property type="entry name" value="SecA, preprotein cross-linking domain"/>
    <property type="match status" value="1"/>
</dbReference>
<dbReference type="HAMAP" id="MF_01382">
    <property type="entry name" value="SecA"/>
    <property type="match status" value="1"/>
</dbReference>
<dbReference type="InterPro" id="IPR014001">
    <property type="entry name" value="Helicase_ATP-bd"/>
</dbReference>
<dbReference type="InterPro" id="IPR027417">
    <property type="entry name" value="P-loop_NTPase"/>
</dbReference>
<dbReference type="InterPro" id="IPR004027">
    <property type="entry name" value="SEC_C_motif"/>
</dbReference>
<dbReference type="InterPro" id="IPR000185">
    <property type="entry name" value="SecA"/>
</dbReference>
<dbReference type="InterPro" id="IPR020937">
    <property type="entry name" value="SecA_CS"/>
</dbReference>
<dbReference type="InterPro" id="IPR011115">
    <property type="entry name" value="SecA_DEAD"/>
</dbReference>
<dbReference type="InterPro" id="IPR014018">
    <property type="entry name" value="SecA_motor_DEAD"/>
</dbReference>
<dbReference type="InterPro" id="IPR011130">
    <property type="entry name" value="SecA_preprotein_X-link_dom"/>
</dbReference>
<dbReference type="InterPro" id="IPR044722">
    <property type="entry name" value="SecA_SF2_C"/>
</dbReference>
<dbReference type="InterPro" id="IPR011116">
    <property type="entry name" value="SecA_Wing/Scaffold"/>
</dbReference>
<dbReference type="InterPro" id="IPR036266">
    <property type="entry name" value="SecA_Wing/Scaffold_sf"/>
</dbReference>
<dbReference type="InterPro" id="IPR036670">
    <property type="entry name" value="SecA_X-link_sf"/>
</dbReference>
<dbReference type="NCBIfam" id="NF009538">
    <property type="entry name" value="PRK12904.1"/>
    <property type="match status" value="1"/>
</dbReference>
<dbReference type="NCBIfam" id="TIGR00963">
    <property type="entry name" value="secA"/>
    <property type="match status" value="1"/>
</dbReference>
<dbReference type="PANTHER" id="PTHR30612:SF0">
    <property type="entry name" value="CHLOROPLAST PROTEIN-TRANSPORTING ATPASE"/>
    <property type="match status" value="1"/>
</dbReference>
<dbReference type="PANTHER" id="PTHR30612">
    <property type="entry name" value="SECA INNER MEMBRANE COMPONENT OF SEC PROTEIN SECRETION SYSTEM"/>
    <property type="match status" value="1"/>
</dbReference>
<dbReference type="Pfam" id="PF21090">
    <property type="entry name" value="P-loop_SecA"/>
    <property type="match status" value="1"/>
</dbReference>
<dbReference type="Pfam" id="PF02810">
    <property type="entry name" value="SEC-C"/>
    <property type="match status" value="1"/>
</dbReference>
<dbReference type="Pfam" id="PF07517">
    <property type="entry name" value="SecA_DEAD"/>
    <property type="match status" value="1"/>
</dbReference>
<dbReference type="Pfam" id="PF01043">
    <property type="entry name" value="SecA_PP_bind"/>
    <property type="match status" value="1"/>
</dbReference>
<dbReference type="Pfam" id="PF07516">
    <property type="entry name" value="SecA_SW"/>
    <property type="match status" value="1"/>
</dbReference>
<dbReference type="PRINTS" id="PR00906">
    <property type="entry name" value="SECA"/>
</dbReference>
<dbReference type="SMART" id="SM00957">
    <property type="entry name" value="SecA_DEAD"/>
    <property type="match status" value="1"/>
</dbReference>
<dbReference type="SMART" id="SM00958">
    <property type="entry name" value="SecA_PP_bind"/>
    <property type="match status" value="1"/>
</dbReference>
<dbReference type="SUPFAM" id="SSF81886">
    <property type="entry name" value="Helical scaffold and wing domains of SecA"/>
    <property type="match status" value="1"/>
</dbReference>
<dbReference type="SUPFAM" id="SSF52540">
    <property type="entry name" value="P-loop containing nucleoside triphosphate hydrolases"/>
    <property type="match status" value="2"/>
</dbReference>
<dbReference type="SUPFAM" id="SSF81767">
    <property type="entry name" value="Pre-protein crosslinking domain of SecA"/>
    <property type="match status" value="1"/>
</dbReference>
<dbReference type="PROSITE" id="PS01312">
    <property type="entry name" value="SECA"/>
    <property type="match status" value="1"/>
</dbReference>
<dbReference type="PROSITE" id="PS51196">
    <property type="entry name" value="SECA_MOTOR_DEAD"/>
    <property type="match status" value="1"/>
</dbReference>
<protein>
    <recommendedName>
        <fullName evidence="1">Protein translocase subunit SecA</fullName>
        <ecNumber evidence="1">7.4.2.8</ecNumber>
    </recommendedName>
</protein>
<sequence>MIDAVLAKVFGTKNEREVKAMLPTVAAIGALEPQLRELSDIDLAAKTIEFKERIAQGATLDDLLIEAFAVVREAGRRVLNMRHFDVQLIGGMVLHKGKIAEMKTGEGKTLVATLPCYLNALGGQGVHVVTVNDYLARRDSEWMGRLYKFLGLRVGVIVHDLDDQERKDAYNADITYGTNNEFGFDYLRDNMKFRIDDCVQRVHNFAIVDEVDSILIDEARTPLIISGPSEESTDKYYKINRIIPKLVRGEVIDGKEPGEKYTTGDYTIDEKHKSSALTEEGVLKLEKLLNIGNLYDPQNIEWNHHVQQALRAHVLYQRDREYVIRDGDEGPEVVIVDEFTGRLMPGRRWSDGLHQAVEAKEGVKIQRENQTLATITFQNYFRMYKKLAGMTGTAETEAAEFYKIYKLEVVVIPTNRSMIRKENTDMVYRTEIEKFRNAAKEIKEYNAKGQPVLVGTISVEKSEHLSGILKKLGVKHEVLNAKNHEREAGIVSQAGRKNAVTVSTNMAGRGTDILLGGNAEFMTKDECLKRKVAEKLTEDQVQYVADEHFYYFTHNEQFYRVRRDLWDEIYKENKAYTDKEHDEVVELGGLHIVATERHESRRIDNQLRGRAGRQGDPGSSRFYLSLQDDLLRIFGGERMQNLMLRLGMEEDVPIESKLITKRIQKAQEAVEAQNFEARKHLLEYDDVNNKQRQTVYGLRRQLLEGEDQKQRVMEMVQGIIEQYIDMRCPDAKHPDNWEMGDLRNDILTQFGYKIDLNELASLSREEMTNTIFDRLQAKYQEKEDLVGADVIRQTERIVMLQVIDNQWKDHLLSMDELKQGIGNRAYGQKDPLVEYKKESYELFTAMMDRIEDETVRYLFFLQVNTGSGPVMPYPDEEEDGDEDSVEEEVRPDPTEQQRLAAKSTMEDFTRNVQRKKEREMEQLQFVGGDGSSTPQQVVAGQKVGRNDPCPCGSGKKYKKCHGS</sequence>
<feature type="chain" id="PRO_0000318422" description="Protein translocase subunit SecA">
    <location>
        <begin position="1"/>
        <end position="963"/>
    </location>
</feature>
<feature type="region of interest" description="Disordered" evidence="2">
    <location>
        <begin position="868"/>
        <end position="909"/>
    </location>
</feature>
<feature type="region of interest" description="Disordered" evidence="2">
    <location>
        <begin position="924"/>
        <end position="963"/>
    </location>
</feature>
<feature type="compositionally biased region" description="Acidic residues" evidence="2">
    <location>
        <begin position="874"/>
        <end position="886"/>
    </location>
</feature>
<feature type="binding site" evidence="1">
    <location>
        <position position="87"/>
    </location>
    <ligand>
        <name>ATP</name>
        <dbReference type="ChEBI" id="CHEBI:30616"/>
    </ligand>
</feature>
<feature type="binding site" evidence="1">
    <location>
        <begin position="105"/>
        <end position="109"/>
    </location>
    <ligand>
        <name>ATP</name>
        <dbReference type="ChEBI" id="CHEBI:30616"/>
    </ligand>
</feature>
<feature type="binding site" evidence="1">
    <location>
        <position position="512"/>
    </location>
    <ligand>
        <name>ATP</name>
        <dbReference type="ChEBI" id="CHEBI:30616"/>
    </ligand>
</feature>
<feature type="binding site" evidence="1">
    <location>
        <position position="949"/>
    </location>
    <ligand>
        <name>Zn(2+)</name>
        <dbReference type="ChEBI" id="CHEBI:29105"/>
    </ligand>
</feature>
<feature type="binding site" evidence="1">
    <location>
        <position position="951"/>
    </location>
    <ligand>
        <name>Zn(2+)</name>
        <dbReference type="ChEBI" id="CHEBI:29105"/>
    </ligand>
</feature>
<feature type="binding site" evidence="1">
    <location>
        <position position="960"/>
    </location>
    <ligand>
        <name>Zn(2+)</name>
        <dbReference type="ChEBI" id="CHEBI:29105"/>
    </ligand>
</feature>
<feature type="binding site" evidence="1">
    <location>
        <position position="961"/>
    </location>
    <ligand>
        <name>Zn(2+)</name>
        <dbReference type="ChEBI" id="CHEBI:29105"/>
    </ligand>
</feature>
<comment type="function">
    <text evidence="1">Part of the Sec protein translocase complex. Interacts with the SecYEG preprotein conducting channel. Has a central role in coupling the hydrolysis of ATP to the transfer of proteins into and across the cell membrane, serving as an ATP-driven molecular motor driving the stepwise translocation of polypeptide chains across the membrane.</text>
</comment>
<comment type="catalytic activity">
    <reaction evidence="1">
        <text>ATP + H2O + cellular proteinSide 1 = ADP + phosphate + cellular proteinSide 2.</text>
        <dbReference type="EC" id="7.4.2.8"/>
    </reaction>
</comment>
<comment type="cofactor">
    <cofactor evidence="1">
        <name>Zn(2+)</name>
        <dbReference type="ChEBI" id="CHEBI:29105"/>
    </cofactor>
    <text evidence="1">May bind 1 zinc ion per subunit.</text>
</comment>
<comment type="subunit">
    <text evidence="1">Monomer and homodimer. Part of the essential Sec protein translocation apparatus which comprises SecA, SecYEG and auxiliary proteins SecDF. Other proteins may also be involved.</text>
</comment>
<comment type="subcellular location">
    <subcellularLocation>
        <location evidence="1">Cell inner membrane</location>
        <topology evidence="1">Peripheral membrane protein</topology>
        <orientation evidence="1">Cytoplasmic side</orientation>
    </subcellularLocation>
    <subcellularLocation>
        <location evidence="1">Cytoplasm</location>
    </subcellularLocation>
    <text evidence="1">Distribution is 50-50.</text>
</comment>
<comment type="similarity">
    <text evidence="1">Belongs to the SecA family.</text>
</comment>
<reference key="1">
    <citation type="journal article" date="2009" name="Appl. Environ. Microbiol.">
        <title>Three genomes from the phylum Acidobacteria provide insight into the lifestyles of these microorganisms in soils.</title>
        <authorList>
            <person name="Ward N.L."/>
            <person name="Challacombe J.F."/>
            <person name="Janssen P.H."/>
            <person name="Henrissat B."/>
            <person name="Coutinho P.M."/>
            <person name="Wu M."/>
            <person name="Xie G."/>
            <person name="Haft D.H."/>
            <person name="Sait M."/>
            <person name="Badger J."/>
            <person name="Barabote R.D."/>
            <person name="Bradley B."/>
            <person name="Brettin T.S."/>
            <person name="Brinkac L.M."/>
            <person name="Bruce D."/>
            <person name="Creasy T."/>
            <person name="Daugherty S.C."/>
            <person name="Davidsen T.M."/>
            <person name="DeBoy R.T."/>
            <person name="Detter J.C."/>
            <person name="Dodson R.J."/>
            <person name="Durkin A.S."/>
            <person name="Ganapathy A."/>
            <person name="Gwinn-Giglio M."/>
            <person name="Han C.S."/>
            <person name="Khouri H."/>
            <person name="Kiss H."/>
            <person name="Kothari S.P."/>
            <person name="Madupu R."/>
            <person name="Nelson K.E."/>
            <person name="Nelson W.C."/>
            <person name="Paulsen I."/>
            <person name="Penn K."/>
            <person name="Ren Q."/>
            <person name="Rosovitz M.J."/>
            <person name="Selengut J.D."/>
            <person name="Shrivastava S."/>
            <person name="Sullivan S.A."/>
            <person name="Tapia R."/>
            <person name="Thompson L.S."/>
            <person name="Watkins K.L."/>
            <person name="Yang Q."/>
            <person name="Yu C."/>
            <person name="Zafar N."/>
            <person name="Zhou L."/>
            <person name="Kuske C.R."/>
        </authorList>
    </citation>
    <scope>NUCLEOTIDE SEQUENCE [LARGE SCALE GENOMIC DNA]</scope>
    <source>
        <strain>Ellin6076</strain>
    </source>
</reference>
<organism>
    <name type="scientific">Solibacter usitatus (strain Ellin6076)</name>
    <dbReference type="NCBI Taxonomy" id="234267"/>
    <lineage>
        <taxon>Bacteria</taxon>
        <taxon>Pseudomonadati</taxon>
        <taxon>Acidobacteriota</taxon>
        <taxon>Terriglobia</taxon>
        <taxon>Bryobacterales</taxon>
        <taxon>Solibacteraceae</taxon>
        <taxon>Candidatus Solibacter</taxon>
    </lineage>
</organism>
<evidence type="ECO:0000255" key="1">
    <source>
        <dbReference type="HAMAP-Rule" id="MF_01382"/>
    </source>
</evidence>
<evidence type="ECO:0000256" key="2">
    <source>
        <dbReference type="SAM" id="MobiDB-lite"/>
    </source>
</evidence>